<comment type="function">
    <text evidence="1">Converts 2C-methyl-D-erythritol 2,4-cyclodiphosphate (ME-2,4cPP) into 1-hydroxy-2-methyl-2-(E)-butenyl 4-diphosphate.</text>
</comment>
<comment type="catalytic activity">
    <reaction evidence="1">
        <text>(2E)-4-hydroxy-3-methylbut-2-enyl diphosphate + oxidized [flavodoxin] + H2O + 2 H(+) = 2-C-methyl-D-erythritol 2,4-cyclic diphosphate + reduced [flavodoxin]</text>
        <dbReference type="Rhea" id="RHEA:43604"/>
        <dbReference type="Rhea" id="RHEA-COMP:10622"/>
        <dbReference type="Rhea" id="RHEA-COMP:10623"/>
        <dbReference type="ChEBI" id="CHEBI:15377"/>
        <dbReference type="ChEBI" id="CHEBI:15378"/>
        <dbReference type="ChEBI" id="CHEBI:57618"/>
        <dbReference type="ChEBI" id="CHEBI:58210"/>
        <dbReference type="ChEBI" id="CHEBI:58483"/>
        <dbReference type="ChEBI" id="CHEBI:128753"/>
        <dbReference type="EC" id="1.17.7.3"/>
    </reaction>
</comment>
<comment type="cofactor">
    <cofactor evidence="1">
        <name>[4Fe-4S] cluster</name>
        <dbReference type="ChEBI" id="CHEBI:49883"/>
    </cofactor>
    <text evidence="1">Binds 1 [4Fe-4S] cluster.</text>
</comment>
<comment type="pathway">
    <text evidence="1">Isoprenoid biosynthesis; isopentenyl diphosphate biosynthesis via DXP pathway; isopentenyl diphosphate from 1-deoxy-D-xylulose 5-phosphate: step 5/6.</text>
</comment>
<comment type="similarity">
    <text evidence="1">Belongs to the IspG family.</text>
</comment>
<proteinExistence type="inferred from homology"/>
<feature type="chain" id="PRO_0000190580" description="4-hydroxy-3-methylbut-2-en-1-yl diphosphate synthase (flavodoxin)">
    <location>
        <begin position="1"/>
        <end position="374"/>
    </location>
</feature>
<feature type="binding site" evidence="1">
    <location>
        <position position="268"/>
    </location>
    <ligand>
        <name>[4Fe-4S] cluster</name>
        <dbReference type="ChEBI" id="CHEBI:49883"/>
    </ligand>
</feature>
<feature type="binding site" evidence="1">
    <location>
        <position position="271"/>
    </location>
    <ligand>
        <name>[4Fe-4S] cluster</name>
        <dbReference type="ChEBI" id="CHEBI:49883"/>
    </ligand>
</feature>
<feature type="binding site" evidence="1">
    <location>
        <position position="303"/>
    </location>
    <ligand>
        <name>[4Fe-4S] cluster</name>
        <dbReference type="ChEBI" id="CHEBI:49883"/>
    </ligand>
</feature>
<feature type="binding site" evidence="1">
    <location>
        <position position="310"/>
    </location>
    <ligand>
        <name>[4Fe-4S] cluster</name>
        <dbReference type="ChEBI" id="CHEBI:49883"/>
    </ligand>
</feature>
<name>ISPG_GEOKA</name>
<accession>Q5KX35</accession>
<protein>
    <recommendedName>
        <fullName evidence="1">4-hydroxy-3-methylbut-2-en-1-yl diphosphate synthase (flavodoxin)</fullName>
        <ecNumber evidence="1">1.17.7.3</ecNumber>
    </recommendedName>
    <alternativeName>
        <fullName evidence="1">1-hydroxy-2-methyl-2-(E)-butenyl 4-diphosphate synthase</fullName>
    </alternativeName>
</protein>
<sequence length="374" mass="40531">MGEIIHRSKTRPVRVGPLTIGGSNEVIIQSMTTTKTHDVEATVAQIHRLEEAGCQIVRVACPDERAAEAIPEIKKRINIPLVADIHFDYKLALKAIEGGVDKIRINPGNIGRREKVEAVVKAAKERGVPIRIGVNAGSLEKRILEKYGYPTADGMVESALYHIRILEELDFHDIIVSLKASDVRLAIEAYEKAARTFDYPLHVGITEAGTLFSGTIKSAVGLGAILSKGIGNTIRVSLSADPVEEVKVAREILKTFGLASNAATLISCPTCGRIEIDLIRIANEIEDYIAKIQAPIKVAVLGCAVNGPGEAREADIGIAGARGEGLLFRHGKIVRKVPEEQMVEELKKEIDKLAEEYFAKQKENKAALKGSAAQ</sequence>
<dbReference type="EC" id="1.17.7.3" evidence="1"/>
<dbReference type="EMBL" id="BA000043">
    <property type="protein sequence ID" value="BAD76751.1"/>
    <property type="molecule type" value="Genomic_DNA"/>
</dbReference>
<dbReference type="RefSeq" id="WP_011231946.1">
    <property type="nucleotide sequence ID" value="NC_006510.1"/>
</dbReference>
<dbReference type="SMR" id="Q5KX35"/>
<dbReference type="STRING" id="235909.GK2466"/>
<dbReference type="KEGG" id="gka:GK2466"/>
<dbReference type="eggNOG" id="COG0821">
    <property type="taxonomic scope" value="Bacteria"/>
</dbReference>
<dbReference type="HOGENOM" id="CLU_042258_0_0_9"/>
<dbReference type="UniPathway" id="UPA00056">
    <property type="reaction ID" value="UER00096"/>
</dbReference>
<dbReference type="Proteomes" id="UP000001172">
    <property type="component" value="Chromosome"/>
</dbReference>
<dbReference type="GO" id="GO:0051539">
    <property type="term" value="F:4 iron, 4 sulfur cluster binding"/>
    <property type="evidence" value="ECO:0007669"/>
    <property type="project" value="UniProtKB-UniRule"/>
</dbReference>
<dbReference type="GO" id="GO:0046429">
    <property type="term" value="F:4-hydroxy-3-methylbut-2-en-1-yl diphosphate synthase activity (ferredoxin)"/>
    <property type="evidence" value="ECO:0007669"/>
    <property type="project" value="UniProtKB-UniRule"/>
</dbReference>
<dbReference type="GO" id="GO:0141197">
    <property type="term" value="F:4-hydroxy-3-methylbut-2-enyl-diphosphate synthase activity (flavodoxin)"/>
    <property type="evidence" value="ECO:0007669"/>
    <property type="project" value="UniProtKB-EC"/>
</dbReference>
<dbReference type="GO" id="GO:0005506">
    <property type="term" value="F:iron ion binding"/>
    <property type="evidence" value="ECO:0007669"/>
    <property type="project" value="InterPro"/>
</dbReference>
<dbReference type="GO" id="GO:0019288">
    <property type="term" value="P:isopentenyl diphosphate biosynthetic process, methylerythritol 4-phosphate pathway"/>
    <property type="evidence" value="ECO:0007669"/>
    <property type="project" value="UniProtKB-UniRule"/>
</dbReference>
<dbReference type="GO" id="GO:0016114">
    <property type="term" value="P:terpenoid biosynthetic process"/>
    <property type="evidence" value="ECO:0007669"/>
    <property type="project" value="InterPro"/>
</dbReference>
<dbReference type="FunFam" id="3.20.20.20:FF:000001">
    <property type="entry name" value="4-hydroxy-3-methylbut-2-en-1-yl diphosphate synthase (flavodoxin)"/>
    <property type="match status" value="1"/>
</dbReference>
<dbReference type="FunFam" id="3.30.413.10:FF:000005">
    <property type="entry name" value="4-hydroxy-3-methylbut-2-en-1-yl diphosphate synthase (flavodoxin)"/>
    <property type="match status" value="1"/>
</dbReference>
<dbReference type="Gene3D" id="3.20.20.20">
    <property type="entry name" value="Dihydropteroate synthase-like"/>
    <property type="match status" value="1"/>
</dbReference>
<dbReference type="Gene3D" id="3.30.413.10">
    <property type="entry name" value="Sulfite Reductase Hemoprotein, domain 1"/>
    <property type="match status" value="1"/>
</dbReference>
<dbReference type="HAMAP" id="MF_00159">
    <property type="entry name" value="IspG"/>
    <property type="match status" value="1"/>
</dbReference>
<dbReference type="InterPro" id="IPR011005">
    <property type="entry name" value="Dihydropteroate_synth-like_sf"/>
</dbReference>
<dbReference type="InterPro" id="IPR016425">
    <property type="entry name" value="IspG_bac"/>
</dbReference>
<dbReference type="InterPro" id="IPR004588">
    <property type="entry name" value="IspG_bac-typ"/>
</dbReference>
<dbReference type="InterPro" id="IPR045854">
    <property type="entry name" value="NO2/SO3_Rdtase_4Fe4S_sf"/>
</dbReference>
<dbReference type="NCBIfam" id="TIGR00612">
    <property type="entry name" value="ispG_gcpE"/>
    <property type="match status" value="1"/>
</dbReference>
<dbReference type="NCBIfam" id="NF001540">
    <property type="entry name" value="PRK00366.1"/>
    <property type="match status" value="1"/>
</dbReference>
<dbReference type="PANTHER" id="PTHR30454">
    <property type="entry name" value="4-HYDROXY-3-METHYLBUT-2-EN-1-YL DIPHOSPHATE SYNTHASE"/>
    <property type="match status" value="1"/>
</dbReference>
<dbReference type="PANTHER" id="PTHR30454:SF0">
    <property type="entry name" value="4-HYDROXY-3-METHYLBUT-2-EN-1-YL DIPHOSPHATE SYNTHASE (FERREDOXIN), CHLOROPLASTIC"/>
    <property type="match status" value="1"/>
</dbReference>
<dbReference type="Pfam" id="PF04551">
    <property type="entry name" value="GcpE"/>
    <property type="match status" value="1"/>
</dbReference>
<dbReference type="PIRSF" id="PIRSF004640">
    <property type="entry name" value="IspG"/>
    <property type="match status" value="1"/>
</dbReference>
<dbReference type="SUPFAM" id="SSF51717">
    <property type="entry name" value="Dihydropteroate synthetase-like"/>
    <property type="match status" value="1"/>
</dbReference>
<dbReference type="SUPFAM" id="SSF56014">
    <property type="entry name" value="Nitrite and sulphite reductase 4Fe-4S domain-like"/>
    <property type="match status" value="1"/>
</dbReference>
<evidence type="ECO:0000255" key="1">
    <source>
        <dbReference type="HAMAP-Rule" id="MF_00159"/>
    </source>
</evidence>
<gene>
    <name evidence="1" type="primary">ispG</name>
    <name type="ordered locus">GK2466</name>
</gene>
<reference key="1">
    <citation type="journal article" date="2004" name="Nucleic Acids Res.">
        <title>Thermoadaptation trait revealed by the genome sequence of thermophilic Geobacillus kaustophilus.</title>
        <authorList>
            <person name="Takami H."/>
            <person name="Takaki Y."/>
            <person name="Chee G.-J."/>
            <person name="Nishi S."/>
            <person name="Shimamura S."/>
            <person name="Suzuki H."/>
            <person name="Matsui S."/>
            <person name="Uchiyama I."/>
        </authorList>
    </citation>
    <scope>NUCLEOTIDE SEQUENCE [LARGE SCALE GENOMIC DNA]</scope>
    <source>
        <strain>HTA426</strain>
    </source>
</reference>
<keyword id="KW-0004">4Fe-4S</keyword>
<keyword id="KW-0408">Iron</keyword>
<keyword id="KW-0411">Iron-sulfur</keyword>
<keyword id="KW-0414">Isoprene biosynthesis</keyword>
<keyword id="KW-0479">Metal-binding</keyword>
<keyword id="KW-0560">Oxidoreductase</keyword>
<keyword id="KW-1185">Reference proteome</keyword>
<organism>
    <name type="scientific">Geobacillus kaustophilus (strain HTA426)</name>
    <dbReference type="NCBI Taxonomy" id="235909"/>
    <lineage>
        <taxon>Bacteria</taxon>
        <taxon>Bacillati</taxon>
        <taxon>Bacillota</taxon>
        <taxon>Bacilli</taxon>
        <taxon>Bacillales</taxon>
        <taxon>Anoxybacillaceae</taxon>
        <taxon>Geobacillus</taxon>
        <taxon>Geobacillus thermoleovorans group</taxon>
    </lineage>
</organism>